<protein>
    <recommendedName>
        <fullName evidence="1">Orotidine 5'-phosphate decarboxylase</fullName>
        <ecNumber evidence="1">4.1.1.23</ecNumber>
    </recommendedName>
    <alternativeName>
        <fullName evidence="1">OMP decarboxylase</fullName>
        <shortName evidence="1">OMPDCase</shortName>
        <shortName evidence="1">OMPdecase</shortName>
    </alternativeName>
</protein>
<gene>
    <name evidence="1" type="primary">pyrF</name>
    <name type="ordered locus">Oter_2441</name>
</gene>
<sequence>MACDLILVLDAPSPRDIAPVLKRLSGTVRWAKIGLEMYTACGPDCVREVADLGYNVFLDLKLHDIPNTVAKAVESAARLPIKMLTLHTCGGREMMSWAAKAQQQHAPELLLLGVTVLTSMSAVHLHEVGVPDSPEAQVVRLGRLAVDAGLRGLVCSPLEIAPLRAALPSDVTLVTPGIRPRDAAADDQTRVMTPAEAARTGANFLVIGRPIFKAPDPVAAARDILAELKS</sequence>
<accession>B1ZSC4</accession>
<reference key="1">
    <citation type="journal article" date="2011" name="J. Bacteriol.">
        <title>Genome sequence of the verrucomicrobium Opitutus terrae PB90-1, an abundant inhabitant of rice paddy soil ecosystems.</title>
        <authorList>
            <person name="van Passel M.W."/>
            <person name="Kant R."/>
            <person name="Palva A."/>
            <person name="Copeland A."/>
            <person name="Lucas S."/>
            <person name="Lapidus A."/>
            <person name="Glavina del Rio T."/>
            <person name="Pitluck S."/>
            <person name="Goltsman E."/>
            <person name="Clum A."/>
            <person name="Sun H."/>
            <person name="Schmutz J."/>
            <person name="Larimer F.W."/>
            <person name="Land M.L."/>
            <person name="Hauser L."/>
            <person name="Kyrpides N."/>
            <person name="Mikhailova N."/>
            <person name="Richardson P.P."/>
            <person name="Janssen P.H."/>
            <person name="de Vos W.M."/>
            <person name="Smidt H."/>
        </authorList>
    </citation>
    <scope>NUCLEOTIDE SEQUENCE [LARGE SCALE GENOMIC DNA]</scope>
    <source>
        <strain>DSM 11246 / JCM 15787 / PB90-1</strain>
    </source>
</reference>
<organism>
    <name type="scientific">Opitutus terrae (strain DSM 11246 / JCM 15787 / PB90-1)</name>
    <dbReference type="NCBI Taxonomy" id="452637"/>
    <lineage>
        <taxon>Bacteria</taxon>
        <taxon>Pseudomonadati</taxon>
        <taxon>Verrucomicrobiota</taxon>
        <taxon>Opitutia</taxon>
        <taxon>Opitutales</taxon>
        <taxon>Opitutaceae</taxon>
        <taxon>Opitutus</taxon>
    </lineage>
</organism>
<feature type="chain" id="PRO_1000213823" description="Orotidine 5'-phosphate decarboxylase">
    <location>
        <begin position="1"/>
        <end position="230"/>
    </location>
</feature>
<feature type="active site" description="Proton donor" evidence="1">
    <location>
        <position position="61"/>
    </location>
</feature>
<feature type="binding site" evidence="1">
    <location>
        <position position="10"/>
    </location>
    <ligand>
        <name>substrate</name>
    </ligand>
</feature>
<feature type="binding site" evidence="1">
    <location>
        <position position="32"/>
    </location>
    <ligand>
        <name>substrate</name>
    </ligand>
</feature>
<feature type="binding site" evidence="1">
    <location>
        <begin position="59"/>
        <end position="68"/>
    </location>
    <ligand>
        <name>substrate</name>
    </ligand>
</feature>
<feature type="binding site" evidence="1">
    <location>
        <position position="118"/>
    </location>
    <ligand>
        <name>substrate</name>
    </ligand>
</feature>
<feature type="binding site" evidence="1">
    <location>
        <position position="179"/>
    </location>
    <ligand>
        <name>substrate</name>
    </ligand>
</feature>
<feature type="binding site" evidence="1">
    <location>
        <position position="188"/>
    </location>
    <ligand>
        <name>substrate</name>
    </ligand>
</feature>
<feature type="binding site" evidence="1">
    <location>
        <position position="208"/>
    </location>
    <ligand>
        <name>substrate</name>
    </ligand>
</feature>
<feature type="binding site" evidence="1">
    <location>
        <position position="209"/>
    </location>
    <ligand>
        <name>substrate</name>
    </ligand>
</feature>
<name>PYRF_OPITP</name>
<proteinExistence type="inferred from homology"/>
<dbReference type="EC" id="4.1.1.23" evidence="1"/>
<dbReference type="EMBL" id="CP001032">
    <property type="protein sequence ID" value="ACB75723.1"/>
    <property type="molecule type" value="Genomic_DNA"/>
</dbReference>
<dbReference type="RefSeq" id="WP_012375258.1">
    <property type="nucleotide sequence ID" value="NC_010571.1"/>
</dbReference>
<dbReference type="SMR" id="B1ZSC4"/>
<dbReference type="STRING" id="452637.Oter_2441"/>
<dbReference type="KEGG" id="ote:Oter_2441"/>
<dbReference type="eggNOG" id="COG0284">
    <property type="taxonomic scope" value="Bacteria"/>
</dbReference>
<dbReference type="HOGENOM" id="CLU_067069_0_0_0"/>
<dbReference type="OrthoDB" id="9806203at2"/>
<dbReference type="UniPathway" id="UPA00070">
    <property type="reaction ID" value="UER00120"/>
</dbReference>
<dbReference type="Proteomes" id="UP000007013">
    <property type="component" value="Chromosome"/>
</dbReference>
<dbReference type="GO" id="GO:0005829">
    <property type="term" value="C:cytosol"/>
    <property type="evidence" value="ECO:0007669"/>
    <property type="project" value="TreeGrafter"/>
</dbReference>
<dbReference type="GO" id="GO:0004590">
    <property type="term" value="F:orotidine-5'-phosphate decarboxylase activity"/>
    <property type="evidence" value="ECO:0007669"/>
    <property type="project" value="UniProtKB-UniRule"/>
</dbReference>
<dbReference type="GO" id="GO:0006207">
    <property type="term" value="P:'de novo' pyrimidine nucleobase biosynthetic process"/>
    <property type="evidence" value="ECO:0007669"/>
    <property type="project" value="InterPro"/>
</dbReference>
<dbReference type="GO" id="GO:0044205">
    <property type="term" value="P:'de novo' UMP biosynthetic process"/>
    <property type="evidence" value="ECO:0007669"/>
    <property type="project" value="UniProtKB-UniRule"/>
</dbReference>
<dbReference type="CDD" id="cd04725">
    <property type="entry name" value="OMP_decarboxylase_like"/>
    <property type="match status" value="1"/>
</dbReference>
<dbReference type="FunFam" id="3.20.20.70:FF:000015">
    <property type="entry name" value="Orotidine 5'-phosphate decarboxylase"/>
    <property type="match status" value="1"/>
</dbReference>
<dbReference type="Gene3D" id="3.20.20.70">
    <property type="entry name" value="Aldolase class I"/>
    <property type="match status" value="1"/>
</dbReference>
<dbReference type="HAMAP" id="MF_01200_B">
    <property type="entry name" value="OMPdecase_type1_B"/>
    <property type="match status" value="1"/>
</dbReference>
<dbReference type="InterPro" id="IPR013785">
    <property type="entry name" value="Aldolase_TIM"/>
</dbReference>
<dbReference type="InterPro" id="IPR014732">
    <property type="entry name" value="OMPdecase"/>
</dbReference>
<dbReference type="InterPro" id="IPR018089">
    <property type="entry name" value="OMPdecase_AS"/>
</dbReference>
<dbReference type="InterPro" id="IPR047596">
    <property type="entry name" value="OMPdecase_bac"/>
</dbReference>
<dbReference type="InterPro" id="IPR001754">
    <property type="entry name" value="OMPdeCOase_dom"/>
</dbReference>
<dbReference type="InterPro" id="IPR011060">
    <property type="entry name" value="RibuloseP-bd_barrel"/>
</dbReference>
<dbReference type="NCBIfam" id="NF001273">
    <property type="entry name" value="PRK00230.1"/>
    <property type="match status" value="1"/>
</dbReference>
<dbReference type="NCBIfam" id="TIGR01740">
    <property type="entry name" value="pyrF"/>
    <property type="match status" value="1"/>
</dbReference>
<dbReference type="PANTHER" id="PTHR32119">
    <property type="entry name" value="OROTIDINE 5'-PHOSPHATE DECARBOXYLASE"/>
    <property type="match status" value="1"/>
</dbReference>
<dbReference type="PANTHER" id="PTHR32119:SF2">
    <property type="entry name" value="OROTIDINE 5'-PHOSPHATE DECARBOXYLASE"/>
    <property type="match status" value="1"/>
</dbReference>
<dbReference type="Pfam" id="PF00215">
    <property type="entry name" value="OMPdecase"/>
    <property type="match status" value="1"/>
</dbReference>
<dbReference type="SMART" id="SM00934">
    <property type="entry name" value="OMPdecase"/>
    <property type="match status" value="1"/>
</dbReference>
<dbReference type="SUPFAM" id="SSF51366">
    <property type="entry name" value="Ribulose-phoshate binding barrel"/>
    <property type="match status" value="1"/>
</dbReference>
<dbReference type="PROSITE" id="PS00156">
    <property type="entry name" value="OMPDECASE"/>
    <property type="match status" value="1"/>
</dbReference>
<evidence type="ECO:0000255" key="1">
    <source>
        <dbReference type="HAMAP-Rule" id="MF_01200"/>
    </source>
</evidence>
<comment type="function">
    <text evidence="1">Catalyzes the decarboxylation of orotidine 5'-monophosphate (OMP) to uridine 5'-monophosphate (UMP).</text>
</comment>
<comment type="catalytic activity">
    <reaction evidence="1">
        <text>orotidine 5'-phosphate + H(+) = UMP + CO2</text>
        <dbReference type="Rhea" id="RHEA:11596"/>
        <dbReference type="ChEBI" id="CHEBI:15378"/>
        <dbReference type="ChEBI" id="CHEBI:16526"/>
        <dbReference type="ChEBI" id="CHEBI:57538"/>
        <dbReference type="ChEBI" id="CHEBI:57865"/>
        <dbReference type="EC" id="4.1.1.23"/>
    </reaction>
</comment>
<comment type="pathway">
    <text evidence="1">Pyrimidine metabolism; UMP biosynthesis via de novo pathway; UMP from orotate: step 2/2.</text>
</comment>
<comment type="subunit">
    <text evidence="1">Homodimer.</text>
</comment>
<comment type="similarity">
    <text evidence="1">Belongs to the OMP decarboxylase family. Type 1 subfamily.</text>
</comment>
<keyword id="KW-0210">Decarboxylase</keyword>
<keyword id="KW-0456">Lyase</keyword>
<keyword id="KW-0665">Pyrimidine biosynthesis</keyword>
<keyword id="KW-1185">Reference proteome</keyword>